<comment type="function">
    <text evidence="1">Catalyzes the phosphorylation of N-acetyl-D-glucosamine (GlcNAc) derived from cell-wall degradation, yielding GlcNAc-6-P.</text>
</comment>
<comment type="catalytic activity">
    <reaction evidence="1">
        <text>N-acetyl-D-glucosamine + ATP = N-acetyl-D-glucosamine 6-phosphate + ADP + H(+)</text>
        <dbReference type="Rhea" id="RHEA:17417"/>
        <dbReference type="ChEBI" id="CHEBI:15378"/>
        <dbReference type="ChEBI" id="CHEBI:30616"/>
        <dbReference type="ChEBI" id="CHEBI:57513"/>
        <dbReference type="ChEBI" id="CHEBI:456216"/>
        <dbReference type="ChEBI" id="CHEBI:506227"/>
        <dbReference type="EC" id="2.7.1.59"/>
    </reaction>
</comment>
<comment type="pathway">
    <text evidence="1">Cell wall biogenesis; peptidoglycan recycling.</text>
</comment>
<comment type="similarity">
    <text evidence="1">Belongs to the ROK (NagC/XylR) family. NagK subfamily.</text>
</comment>
<keyword id="KW-0067">ATP-binding</keyword>
<keyword id="KW-0119">Carbohydrate metabolism</keyword>
<keyword id="KW-0418">Kinase</keyword>
<keyword id="KW-0479">Metal-binding</keyword>
<keyword id="KW-0547">Nucleotide-binding</keyword>
<keyword id="KW-0808">Transferase</keyword>
<keyword id="KW-0862">Zinc</keyword>
<reference key="1">
    <citation type="journal article" date="2009" name="PLoS Genet.">
        <title>Organised genome dynamics in the Escherichia coli species results in highly diverse adaptive paths.</title>
        <authorList>
            <person name="Touchon M."/>
            <person name="Hoede C."/>
            <person name="Tenaillon O."/>
            <person name="Barbe V."/>
            <person name="Baeriswyl S."/>
            <person name="Bidet P."/>
            <person name="Bingen E."/>
            <person name="Bonacorsi S."/>
            <person name="Bouchier C."/>
            <person name="Bouvet O."/>
            <person name="Calteau A."/>
            <person name="Chiapello H."/>
            <person name="Clermont O."/>
            <person name="Cruveiller S."/>
            <person name="Danchin A."/>
            <person name="Diard M."/>
            <person name="Dossat C."/>
            <person name="Karoui M.E."/>
            <person name="Frapy E."/>
            <person name="Garry L."/>
            <person name="Ghigo J.M."/>
            <person name="Gilles A.M."/>
            <person name="Johnson J."/>
            <person name="Le Bouguenec C."/>
            <person name="Lescat M."/>
            <person name="Mangenot S."/>
            <person name="Martinez-Jehanne V."/>
            <person name="Matic I."/>
            <person name="Nassif X."/>
            <person name="Oztas S."/>
            <person name="Petit M.A."/>
            <person name="Pichon C."/>
            <person name="Rouy Z."/>
            <person name="Ruf C.S."/>
            <person name="Schneider D."/>
            <person name="Tourret J."/>
            <person name="Vacherie B."/>
            <person name="Vallenet D."/>
            <person name="Medigue C."/>
            <person name="Rocha E.P.C."/>
            <person name="Denamur E."/>
        </authorList>
    </citation>
    <scope>NUCLEOTIDE SEQUENCE [LARGE SCALE GENOMIC DNA]</scope>
    <source>
        <strain>UMN026 / ExPEC</strain>
    </source>
</reference>
<gene>
    <name evidence="1" type="primary">nagK</name>
    <name type="ordered locus">ECUMN_1297</name>
</gene>
<evidence type="ECO:0000255" key="1">
    <source>
        <dbReference type="HAMAP-Rule" id="MF_01271"/>
    </source>
</evidence>
<dbReference type="EC" id="2.7.1.59" evidence="1"/>
<dbReference type="EMBL" id="CU928163">
    <property type="protein sequence ID" value="CAR12506.1"/>
    <property type="molecule type" value="Genomic_DNA"/>
</dbReference>
<dbReference type="RefSeq" id="WP_000291270.1">
    <property type="nucleotide sequence ID" value="NC_011751.1"/>
</dbReference>
<dbReference type="RefSeq" id="YP_002412049.1">
    <property type="nucleotide sequence ID" value="NC_011751.1"/>
</dbReference>
<dbReference type="SMR" id="B7NAZ7"/>
<dbReference type="STRING" id="585056.ECUMN_1297"/>
<dbReference type="GeneID" id="75171243"/>
<dbReference type="KEGG" id="eum:ECUMN_1297"/>
<dbReference type="PATRIC" id="fig|585056.7.peg.1501"/>
<dbReference type="HOGENOM" id="CLU_036604_0_3_6"/>
<dbReference type="UniPathway" id="UPA00544"/>
<dbReference type="Proteomes" id="UP000007097">
    <property type="component" value="Chromosome"/>
</dbReference>
<dbReference type="GO" id="GO:0005524">
    <property type="term" value="F:ATP binding"/>
    <property type="evidence" value="ECO:0007669"/>
    <property type="project" value="UniProtKB-UniRule"/>
</dbReference>
<dbReference type="GO" id="GO:0045127">
    <property type="term" value="F:N-acetylglucosamine kinase activity"/>
    <property type="evidence" value="ECO:0007669"/>
    <property type="project" value="UniProtKB-UniRule"/>
</dbReference>
<dbReference type="GO" id="GO:0008270">
    <property type="term" value="F:zinc ion binding"/>
    <property type="evidence" value="ECO:0007669"/>
    <property type="project" value="UniProtKB-UniRule"/>
</dbReference>
<dbReference type="GO" id="GO:0006044">
    <property type="term" value="P:N-acetylglucosamine metabolic process"/>
    <property type="evidence" value="ECO:0007669"/>
    <property type="project" value="UniProtKB-UniRule"/>
</dbReference>
<dbReference type="GO" id="GO:0009254">
    <property type="term" value="P:peptidoglycan turnover"/>
    <property type="evidence" value="ECO:0007669"/>
    <property type="project" value="UniProtKB-UniRule"/>
</dbReference>
<dbReference type="CDD" id="cd24057">
    <property type="entry name" value="ASKHA_NBD_ROK_NAGK"/>
    <property type="match status" value="1"/>
</dbReference>
<dbReference type="FunFam" id="3.30.420.40:FF:000049">
    <property type="entry name" value="N-acetyl-D-glucosamine kinase"/>
    <property type="match status" value="1"/>
</dbReference>
<dbReference type="FunFam" id="3.30.420.40:FF:000051">
    <property type="entry name" value="N-acetyl-D-glucosamine kinase"/>
    <property type="match status" value="1"/>
</dbReference>
<dbReference type="Gene3D" id="3.30.420.40">
    <property type="match status" value="2"/>
</dbReference>
<dbReference type="HAMAP" id="MF_01271">
    <property type="entry name" value="GlcNAc_kinase"/>
    <property type="match status" value="1"/>
</dbReference>
<dbReference type="InterPro" id="IPR043129">
    <property type="entry name" value="ATPase_NBD"/>
</dbReference>
<dbReference type="InterPro" id="IPR023505">
    <property type="entry name" value="N-acetyl-D-glucosamine_kinase"/>
</dbReference>
<dbReference type="InterPro" id="IPR000600">
    <property type="entry name" value="ROK"/>
</dbReference>
<dbReference type="InterPro" id="IPR049874">
    <property type="entry name" value="ROK_cs"/>
</dbReference>
<dbReference type="NCBIfam" id="NF009835">
    <property type="entry name" value="PRK13310.1"/>
    <property type="match status" value="1"/>
</dbReference>
<dbReference type="PANTHER" id="PTHR18964:SF162">
    <property type="entry name" value="N-ACETYL-D-GLUCOSAMINE KINASE"/>
    <property type="match status" value="1"/>
</dbReference>
<dbReference type="PANTHER" id="PTHR18964">
    <property type="entry name" value="ROK (REPRESSOR, ORF, KINASE) FAMILY"/>
    <property type="match status" value="1"/>
</dbReference>
<dbReference type="Pfam" id="PF00480">
    <property type="entry name" value="ROK"/>
    <property type="match status" value="1"/>
</dbReference>
<dbReference type="SUPFAM" id="SSF53067">
    <property type="entry name" value="Actin-like ATPase domain"/>
    <property type="match status" value="1"/>
</dbReference>
<dbReference type="PROSITE" id="PS01125">
    <property type="entry name" value="ROK"/>
    <property type="match status" value="1"/>
</dbReference>
<feature type="chain" id="PRO_1000140185" description="N-acetyl-D-glucosamine kinase">
    <location>
        <begin position="1"/>
        <end position="303"/>
    </location>
</feature>
<feature type="binding site" evidence="1">
    <location>
        <begin position="4"/>
        <end position="11"/>
    </location>
    <ligand>
        <name>ATP</name>
        <dbReference type="ChEBI" id="CHEBI:30616"/>
    </ligand>
</feature>
<feature type="binding site" evidence="1">
    <location>
        <begin position="133"/>
        <end position="140"/>
    </location>
    <ligand>
        <name>ATP</name>
        <dbReference type="ChEBI" id="CHEBI:30616"/>
    </ligand>
</feature>
<feature type="binding site" evidence="1">
    <location>
        <position position="157"/>
    </location>
    <ligand>
        <name>Zn(2+)</name>
        <dbReference type="ChEBI" id="CHEBI:29105"/>
    </ligand>
</feature>
<feature type="binding site" evidence="1">
    <location>
        <position position="177"/>
    </location>
    <ligand>
        <name>Zn(2+)</name>
        <dbReference type="ChEBI" id="CHEBI:29105"/>
    </ligand>
</feature>
<feature type="binding site" evidence="1">
    <location>
        <position position="179"/>
    </location>
    <ligand>
        <name>Zn(2+)</name>
        <dbReference type="ChEBI" id="CHEBI:29105"/>
    </ligand>
</feature>
<feature type="binding site" evidence="1">
    <location>
        <position position="184"/>
    </location>
    <ligand>
        <name>Zn(2+)</name>
        <dbReference type="ChEBI" id="CHEBI:29105"/>
    </ligand>
</feature>
<accession>B7NAZ7</accession>
<protein>
    <recommendedName>
        <fullName evidence="1">N-acetyl-D-glucosamine kinase</fullName>
        <ecNumber evidence="1">2.7.1.59</ecNumber>
    </recommendedName>
    <alternativeName>
        <fullName evidence="1">GlcNAc kinase</fullName>
    </alternativeName>
</protein>
<organism>
    <name type="scientific">Escherichia coli O17:K52:H18 (strain UMN026 / ExPEC)</name>
    <dbReference type="NCBI Taxonomy" id="585056"/>
    <lineage>
        <taxon>Bacteria</taxon>
        <taxon>Pseudomonadati</taxon>
        <taxon>Pseudomonadota</taxon>
        <taxon>Gammaproteobacteria</taxon>
        <taxon>Enterobacterales</taxon>
        <taxon>Enterobacteriaceae</taxon>
        <taxon>Escherichia</taxon>
    </lineage>
</organism>
<name>NAGK_ECOLU</name>
<proteinExistence type="inferred from homology"/>
<sequence length="303" mass="33043">MYYGFDIGGTKIALGVFDSGRQLQWEKRVPTPRDSYDAFLDAVCELVAEADQRFGCKGSVGIGIPGMPETEDGTLYAANVPAASGKPLRADLSARLDRDVRLDNDANCFALSEAWDDEFTQYPLVMGLILGTGVGGGLIFNGKPITGKSYITGEFGHMRLPVDALTMMGLDFPLRRCGCGQHGCIENYLSGRGFAWLYQHYYHQPLQAPEIIALYDQGDEQARAHVERYLDLLAVCLGNILTIVDPDLVVIGGGLSNFPAITTQLADRLPRHLLPVARVPRIERARHGDAGGMRGAAFLHLTD</sequence>